<proteinExistence type="inferred from homology"/>
<feature type="chain" id="PRO_0000188703" description="1,4-alpha-glucan branching enzyme GlgB">
    <location>
        <begin position="1"/>
        <end position="728"/>
    </location>
</feature>
<feature type="active site" description="Nucleophile" evidence="1">
    <location>
        <position position="405"/>
    </location>
</feature>
<feature type="active site" description="Proton donor" evidence="1">
    <location>
        <position position="458"/>
    </location>
</feature>
<reference key="1">
    <citation type="journal article" date="2002" name="Proc. Natl. Acad. Sci. U.S.A.">
        <title>Extensive mosaic structure revealed by the complete genome sequence of uropathogenic Escherichia coli.</title>
        <authorList>
            <person name="Welch R.A."/>
            <person name="Burland V."/>
            <person name="Plunkett G. III"/>
            <person name="Redford P."/>
            <person name="Roesch P."/>
            <person name="Rasko D."/>
            <person name="Buckles E.L."/>
            <person name="Liou S.-R."/>
            <person name="Boutin A."/>
            <person name="Hackett J."/>
            <person name="Stroud D."/>
            <person name="Mayhew G.F."/>
            <person name="Rose D.J."/>
            <person name="Zhou S."/>
            <person name="Schwartz D.C."/>
            <person name="Perna N.T."/>
            <person name="Mobley H.L.T."/>
            <person name="Donnenberg M.S."/>
            <person name="Blattner F.R."/>
        </authorList>
    </citation>
    <scope>NUCLEOTIDE SEQUENCE [LARGE SCALE GENOMIC DNA]</scope>
    <source>
        <strain>CFT073 / ATCC 700928 / UPEC</strain>
    </source>
</reference>
<dbReference type="EC" id="2.4.1.18" evidence="1"/>
<dbReference type="EMBL" id="AE014075">
    <property type="protein sequence ID" value="AAN82657.1"/>
    <property type="molecule type" value="Genomic_DNA"/>
</dbReference>
<dbReference type="RefSeq" id="WP_001283738.1">
    <property type="nucleotide sequence ID" value="NZ_CP051263.1"/>
</dbReference>
<dbReference type="SMR" id="Q8FCR7"/>
<dbReference type="STRING" id="199310.c4219"/>
<dbReference type="CAZy" id="CBM48">
    <property type="family name" value="Carbohydrate-Binding Module Family 48"/>
</dbReference>
<dbReference type="CAZy" id="GH13">
    <property type="family name" value="Glycoside Hydrolase Family 13"/>
</dbReference>
<dbReference type="KEGG" id="ecc:c4219"/>
<dbReference type="eggNOG" id="COG0296">
    <property type="taxonomic scope" value="Bacteria"/>
</dbReference>
<dbReference type="HOGENOM" id="CLU_004245_3_2_6"/>
<dbReference type="BioCyc" id="ECOL199310:C4219-MONOMER"/>
<dbReference type="UniPathway" id="UPA00164"/>
<dbReference type="Proteomes" id="UP000001410">
    <property type="component" value="Chromosome"/>
</dbReference>
<dbReference type="GO" id="GO:0005829">
    <property type="term" value="C:cytosol"/>
    <property type="evidence" value="ECO:0007669"/>
    <property type="project" value="TreeGrafter"/>
</dbReference>
<dbReference type="GO" id="GO:0003844">
    <property type="term" value="F:1,4-alpha-glucan branching enzyme activity"/>
    <property type="evidence" value="ECO:0007669"/>
    <property type="project" value="UniProtKB-UniRule"/>
</dbReference>
<dbReference type="GO" id="GO:0043169">
    <property type="term" value="F:cation binding"/>
    <property type="evidence" value="ECO:0007669"/>
    <property type="project" value="InterPro"/>
</dbReference>
<dbReference type="GO" id="GO:0004553">
    <property type="term" value="F:hydrolase activity, hydrolyzing O-glycosyl compounds"/>
    <property type="evidence" value="ECO:0007669"/>
    <property type="project" value="InterPro"/>
</dbReference>
<dbReference type="GO" id="GO:0005978">
    <property type="term" value="P:glycogen biosynthetic process"/>
    <property type="evidence" value="ECO:0007669"/>
    <property type="project" value="UniProtKB-UniRule"/>
</dbReference>
<dbReference type="CDD" id="cd11322">
    <property type="entry name" value="AmyAc_Glg_BE"/>
    <property type="match status" value="1"/>
</dbReference>
<dbReference type="CDD" id="cd02855">
    <property type="entry name" value="E_set_GBE_prok_N"/>
    <property type="match status" value="1"/>
</dbReference>
<dbReference type="FunFam" id="2.60.40.10:FF:000169">
    <property type="entry name" value="1,4-alpha-glucan branching enzyme GlgB"/>
    <property type="match status" value="1"/>
</dbReference>
<dbReference type="FunFam" id="2.60.40.10:FF:000331">
    <property type="entry name" value="1,4-alpha-glucan branching enzyme GlgB"/>
    <property type="match status" value="1"/>
</dbReference>
<dbReference type="FunFam" id="2.60.40.1180:FF:000002">
    <property type="entry name" value="1,4-alpha-glucan branching enzyme GlgB"/>
    <property type="match status" value="1"/>
</dbReference>
<dbReference type="FunFam" id="3.20.20.80:FF:000003">
    <property type="entry name" value="1,4-alpha-glucan branching enzyme GlgB"/>
    <property type="match status" value="1"/>
</dbReference>
<dbReference type="Gene3D" id="3.20.20.80">
    <property type="entry name" value="Glycosidases"/>
    <property type="match status" value="1"/>
</dbReference>
<dbReference type="Gene3D" id="2.60.40.1180">
    <property type="entry name" value="Golgi alpha-mannosidase II"/>
    <property type="match status" value="1"/>
</dbReference>
<dbReference type="Gene3D" id="2.60.40.10">
    <property type="entry name" value="Immunoglobulins"/>
    <property type="match status" value="2"/>
</dbReference>
<dbReference type="HAMAP" id="MF_00685">
    <property type="entry name" value="GlgB"/>
    <property type="match status" value="1"/>
</dbReference>
<dbReference type="InterPro" id="IPR006048">
    <property type="entry name" value="A-amylase/branching_C"/>
</dbReference>
<dbReference type="InterPro" id="IPR037439">
    <property type="entry name" value="Branching_enzy"/>
</dbReference>
<dbReference type="InterPro" id="IPR006407">
    <property type="entry name" value="GlgB"/>
</dbReference>
<dbReference type="InterPro" id="IPR054169">
    <property type="entry name" value="GlgB_N"/>
</dbReference>
<dbReference type="InterPro" id="IPR044143">
    <property type="entry name" value="GlgB_N_E_set_prok"/>
</dbReference>
<dbReference type="InterPro" id="IPR006047">
    <property type="entry name" value="Glyco_hydro_13_cat_dom"/>
</dbReference>
<dbReference type="InterPro" id="IPR004193">
    <property type="entry name" value="Glyco_hydro_13_N"/>
</dbReference>
<dbReference type="InterPro" id="IPR013780">
    <property type="entry name" value="Glyco_hydro_b"/>
</dbReference>
<dbReference type="InterPro" id="IPR017853">
    <property type="entry name" value="Glycoside_hydrolase_SF"/>
</dbReference>
<dbReference type="InterPro" id="IPR013783">
    <property type="entry name" value="Ig-like_fold"/>
</dbReference>
<dbReference type="InterPro" id="IPR014756">
    <property type="entry name" value="Ig_E-set"/>
</dbReference>
<dbReference type="NCBIfam" id="TIGR01515">
    <property type="entry name" value="branching_enzym"/>
    <property type="match status" value="1"/>
</dbReference>
<dbReference type="NCBIfam" id="NF003811">
    <property type="entry name" value="PRK05402.1"/>
    <property type="match status" value="1"/>
</dbReference>
<dbReference type="NCBIfam" id="NF008967">
    <property type="entry name" value="PRK12313.1"/>
    <property type="match status" value="1"/>
</dbReference>
<dbReference type="PANTHER" id="PTHR43651">
    <property type="entry name" value="1,4-ALPHA-GLUCAN-BRANCHING ENZYME"/>
    <property type="match status" value="1"/>
</dbReference>
<dbReference type="PANTHER" id="PTHR43651:SF3">
    <property type="entry name" value="1,4-ALPHA-GLUCAN-BRANCHING ENZYME"/>
    <property type="match status" value="1"/>
</dbReference>
<dbReference type="Pfam" id="PF00128">
    <property type="entry name" value="Alpha-amylase"/>
    <property type="match status" value="1"/>
</dbReference>
<dbReference type="Pfam" id="PF02806">
    <property type="entry name" value="Alpha-amylase_C"/>
    <property type="match status" value="1"/>
</dbReference>
<dbReference type="Pfam" id="PF02922">
    <property type="entry name" value="CBM_48"/>
    <property type="match status" value="1"/>
</dbReference>
<dbReference type="Pfam" id="PF22019">
    <property type="entry name" value="GlgB_N"/>
    <property type="match status" value="1"/>
</dbReference>
<dbReference type="PIRSF" id="PIRSF000463">
    <property type="entry name" value="GlgB"/>
    <property type="match status" value="1"/>
</dbReference>
<dbReference type="SMART" id="SM00642">
    <property type="entry name" value="Aamy"/>
    <property type="match status" value="1"/>
</dbReference>
<dbReference type="SUPFAM" id="SSF51445">
    <property type="entry name" value="(Trans)glycosidases"/>
    <property type="match status" value="1"/>
</dbReference>
<dbReference type="SUPFAM" id="SSF81296">
    <property type="entry name" value="E set domains"/>
    <property type="match status" value="2"/>
</dbReference>
<dbReference type="SUPFAM" id="SSF51011">
    <property type="entry name" value="Glycosyl hydrolase domain"/>
    <property type="match status" value="1"/>
</dbReference>
<name>GLGB_ECOL6</name>
<comment type="function">
    <text evidence="1">Catalyzes the formation of the alpha-1,6-glucosidic linkages in glycogen by scission of a 1,4-alpha-linked oligosaccharide from growing alpha-1,4-glucan chains and the subsequent attachment of the oligosaccharide to the alpha-1,6 position.</text>
</comment>
<comment type="catalytic activity">
    <reaction evidence="1">
        <text>Transfers a segment of a (1-&gt;4)-alpha-D-glucan chain to a primary hydroxy group in a similar glucan chain.</text>
        <dbReference type="EC" id="2.4.1.18"/>
    </reaction>
</comment>
<comment type="pathway">
    <text evidence="1">Glycan biosynthesis; glycogen biosynthesis.</text>
</comment>
<comment type="subunit">
    <text evidence="1">Monomer.</text>
</comment>
<comment type="similarity">
    <text evidence="1">Belongs to the glycosyl hydrolase 13 family. GlgB subfamily.</text>
</comment>
<gene>
    <name evidence="1" type="primary">glgB</name>
    <name type="ordered locus">c4219</name>
</gene>
<protein>
    <recommendedName>
        <fullName evidence="1">1,4-alpha-glucan branching enzyme GlgB</fullName>
        <ecNumber evidence="1">2.4.1.18</ecNumber>
    </recommendedName>
    <alternativeName>
        <fullName evidence="1">1,4-alpha-D-glucan:1,4-alpha-D-glucan 6-glucosyl-transferase</fullName>
    </alternativeName>
    <alternativeName>
        <fullName evidence="1">Alpha-(1-&gt;4)-glucan branching enzyme</fullName>
    </alternativeName>
    <alternativeName>
        <fullName evidence="1">Glycogen branching enzyme</fullName>
        <shortName evidence="1">BE</shortName>
    </alternativeName>
</protein>
<organism>
    <name type="scientific">Escherichia coli O6:H1 (strain CFT073 / ATCC 700928 / UPEC)</name>
    <dbReference type="NCBI Taxonomy" id="199310"/>
    <lineage>
        <taxon>Bacteria</taxon>
        <taxon>Pseudomonadati</taxon>
        <taxon>Pseudomonadota</taxon>
        <taxon>Gammaproteobacteria</taxon>
        <taxon>Enterobacterales</taxon>
        <taxon>Enterobacteriaceae</taxon>
        <taxon>Escherichia</taxon>
    </lineage>
</organism>
<accession>Q8FCR7</accession>
<evidence type="ECO:0000255" key="1">
    <source>
        <dbReference type="HAMAP-Rule" id="MF_00685"/>
    </source>
</evidence>
<keyword id="KW-0119">Carbohydrate metabolism</keyword>
<keyword id="KW-0320">Glycogen biosynthesis</keyword>
<keyword id="KW-0321">Glycogen metabolism</keyword>
<keyword id="KW-0328">Glycosyltransferase</keyword>
<keyword id="KW-1185">Reference proteome</keyword>
<keyword id="KW-0808">Transferase</keyword>
<sequence length="728" mass="84393">MSDRIDRDVINALIAGHFADPFSVLGMHKTTAGLEVRALLPDATDVWVIEPKTGRKLAKLECLDSRGFFSGVIPRRKNFFRYQLAVVWHGQQNLIDDPYRFGPLIQEMDAWLLSEGTHLRPYETLGAHADTMDGVTGTRFSVWAPNARRVSVVGQFNYWDGRRHPMRLRKESGIWELFIPGAHNGQLYKYEMIDANGNLRLKSDPYAFEAQMRPETASLICSLPEKVVQTEERKKANQFDAPISIYEVHLGSWRRHTDNNFWLSYRELADQLVPYAKWMGFTHLELLPINEHPFDGSWGYQPTGLYAPTRRFGTRDDFRYFIDAAHAAGLNVILDWVPGHFPTDDFALAEFDGTNLYEHSDPREGYHQDWNTLIYNYGRREVSNFLVGNALYWIERFGIDALRVDAVASMIYRDYSRKEGEWIPNEFGGRENLEAIEFLRNTNRILGEQVSGAVTMAEESTDFPGVSRPQDMGGLGFWYKWNLGWMHDTLDYMKLDPIYRQYHHDKLTFGMLYNYTENFVLPLSHDEVVHGKKSILDRMPGDAWQKFANLRAYYGWMWAFPGKKLLFMGNEFAQGREWNHDASLDWHLLEGGDNWHHGVQRLVRDLNHTYRHHKAMHELDFDPYGFEWLVVDDKERSVLIFVRRDKEGNEIIVASNFTPVPRHDYRFGINQPGKWREILNTDSMHYHGSNAGNGGAVHSDEIASHGRQHSLSLTLPPLATIWLVREAE</sequence>